<name>APCF_PORPU</name>
<sequence>MQDAITAILNRYDLTGRYLDKAAVTQLESFFSSGLDRIKIAEIINNQATNILKEASAQLYEEQPELLRPGGNSYTTRRYAACLRDIEYYLRYTSYALIAGNTNILDQRVLNGLKDTYNSLSVPLAPTVRSIQLLQEIIEEELELQSITRKDIVQEPFQHLINALSEQDL</sequence>
<dbReference type="EMBL" id="U38804">
    <property type="protein sequence ID" value="AAC08101.1"/>
    <property type="molecule type" value="Genomic_DNA"/>
</dbReference>
<dbReference type="PIR" id="S73136">
    <property type="entry name" value="S73136"/>
</dbReference>
<dbReference type="RefSeq" id="NP_053825.1">
    <property type="nucleotide sequence ID" value="NC_000925.1"/>
</dbReference>
<dbReference type="SMR" id="P51215"/>
<dbReference type="GeneID" id="809839"/>
<dbReference type="GO" id="GO:0009535">
    <property type="term" value="C:chloroplast thylakoid membrane"/>
    <property type="evidence" value="ECO:0007669"/>
    <property type="project" value="UniProtKB-SubCell"/>
</dbReference>
<dbReference type="GO" id="GO:0030089">
    <property type="term" value="C:phycobilisome"/>
    <property type="evidence" value="ECO:0007669"/>
    <property type="project" value="UniProtKB-KW"/>
</dbReference>
<dbReference type="GO" id="GO:0015979">
    <property type="term" value="P:photosynthesis"/>
    <property type="evidence" value="ECO:0007669"/>
    <property type="project" value="UniProtKB-KW"/>
</dbReference>
<dbReference type="CDD" id="cd12126">
    <property type="entry name" value="APC_beta"/>
    <property type="match status" value="1"/>
</dbReference>
<dbReference type="Gene3D" id="1.10.490.20">
    <property type="entry name" value="Phycocyanins"/>
    <property type="match status" value="1"/>
</dbReference>
<dbReference type="InterPro" id="IPR006245">
    <property type="entry name" value="Allophycocyanin_b"/>
</dbReference>
<dbReference type="InterPro" id="IPR009050">
    <property type="entry name" value="Globin-like_sf"/>
</dbReference>
<dbReference type="InterPro" id="IPR012128">
    <property type="entry name" value="Phycobilisome_asu/bsu"/>
</dbReference>
<dbReference type="InterPro" id="IPR038719">
    <property type="entry name" value="Phycobilisome_asu/bsu_sf"/>
</dbReference>
<dbReference type="NCBIfam" id="TIGR01337">
    <property type="entry name" value="apcB"/>
    <property type="match status" value="1"/>
</dbReference>
<dbReference type="PANTHER" id="PTHR34011:SF3">
    <property type="entry name" value="ALLOPHYCOCYANIN BETA CHAIN"/>
    <property type="match status" value="1"/>
</dbReference>
<dbReference type="PANTHER" id="PTHR34011">
    <property type="entry name" value="PHYCOBILISOME 32.1 KDA LINKER POLYPEPTIDE, PHYCOCYANIN-ASSOCIATED, ROD 2-RELATED"/>
    <property type="match status" value="1"/>
</dbReference>
<dbReference type="Pfam" id="PF00502">
    <property type="entry name" value="Phycobilisome"/>
    <property type="match status" value="1"/>
</dbReference>
<dbReference type="PIRSF" id="PIRSF000081">
    <property type="entry name" value="Phycocyanin"/>
    <property type="match status" value="1"/>
</dbReference>
<dbReference type="SUPFAM" id="SSF46458">
    <property type="entry name" value="Globin-like"/>
    <property type="match status" value="1"/>
</dbReference>
<gene>
    <name type="primary">apcF</name>
</gene>
<reference key="1">
    <citation type="journal article" date="1995" name="Plant Mol. Biol. Rep.">
        <title>Complete nucleotide sequence of the Porphyra purpurea chloroplast genome.</title>
        <authorList>
            <person name="Reith M.E."/>
            <person name="Munholland J."/>
        </authorList>
    </citation>
    <scope>NUCLEOTIDE SEQUENCE [LARGE SCALE GENOMIC DNA]</scope>
    <source>
        <strain>Avonport</strain>
    </source>
</reference>
<feature type="chain" id="PRO_0000199091" description="Allophycocyanin subunit beta-18">
    <location>
        <begin position="1"/>
        <end position="169"/>
    </location>
</feature>
<feature type="binding site" description="covalent" evidence="1">
    <location>
        <position position="82"/>
    </location>
    <ligand>
        <name>(2R,3E)-phycocyanobilin</name>
        <dbReference type="ChEBI" id="CHEBI:85275"/>
    </ligand>
</feature>
<feature type="modified residue" description="N4-methylasparagine" evidence="1">
    <location>
        <position position="72"/>
    </location>
</feature>
<proteinExistence type="inferred from homology"/>
<geneLocation type="chloroplast"/>
<evidence type="ECO:0000250" key="1"/>
<evidence type="ECO:0000305" key="2"/>
<comment type="function">
    <text evidence="1">Light-harvesting photosynthetic bile pigment-protein from the phycobiliprotein complex. Allophycocyanin has a maximum absorption at approximately 650 nanometers (By similarity).</text>
</comment>
<comment type="subunit">
    <text evidence="1">Heterodimer of an alpha and a beta chain.</text>
</comment>
<comment type="subcellular location">
    <subcellularLocation>
        <location evidence="1">Plastid</location>
        <location evidence="1">Chloroplast thylakoid membrane</location>
        <topology evidence="1">Peripheral membrane protein</topology>
        <orientation evidence="1">Stromal side</orientation>
    </subcellularLocation>
    <text evidence="1">Forms the core of the phycobilisome.</text>
</comment>
<comment type="PTM">
    <text evidence="1">Contains one covalently linked bilin chromophore.</text>
</comment>
<comment type="similarity">
    <text evidence="2">Belongs to the phycobiliprotein family.</text>
</comment>
<protein>
    <recommendedName>
        <fullName>Allophycocyanin subunit beta-18</fullName>
        <shortName>Allophycocyanin subunit B18</shortName>
    </recommendedName>
</protein>
<accession>P51215</accession>
<organism>
    <name type="scientific">Porphyra purpurea</name>
    <name type="common">Red seaweed</name>
    <name type="synonym">Ulva purpurea</name>
    <dbReference type="NCBI Taxonomy" id="2787"/>
    <lineage>
        <taxon>Eukaryota</taxon>
        <taxon>Rhodophyta</taxon>
        <taxon>Bangiophyceae</taxon>
        <taxon>Bangiales</taxon>
        <taxon>Bangiaceae</taxon>
        <taxon>Porphyra</taxon>
    </lineage>
</organism>
<keyword id="KW-0042">Antenna complex</keyword>
<keyword id="KW-0089">Bile pigment</keyword>
<keyword id="KW-0150">Chloroplast</keyword>
<keyword id="KW-0157">Chromophore</keyword>
<keyword id="KW-0249">Electron transport</keyword>
<keyword id="KW-0472">Membrane</keyword>
<keyword id="KW-0488">Methylation</keyword>
<keyword id="KW-0602">Photosynthesis</keyword>
<keyword id="KW-0605">Phycobilisome</keyword>
<keyword id="KW-0934">Plastid</keyword>
<keyword id="KW-0793">Thylakoid</keyword>
<keyword id="KW-0813">Transport</keyword>